<geneLocation type="chloroplast"/>
<dbReference type="EMBL" id="AY514848">
    <property type="protein sequence ID" value="AAT28278.1"/>
    <property type="molecule type" value="Genomic_DNA"/>
</dbReference>
<dbReference type="GO" id="GO:0009507">
    <property type="term" value="C:chloroplast"/>
    <property type="evidence" value="ECO:0007669"/>
    <property type="project" value="UniProtKB-SubCell"/>
</dbReference>
<dbReference type="GO" id="GO:0003723">
    <property type="term" value="F:RNA binding"/>
    <property type="evidence" value="ECO:0007669"/>
    <property type="project" value="UniProtKB-KW"/>
</dbReference>
<dbReference type="GO" id="GO:0006397">
    <property type="term" value="P:mRNA processing"/>
    <property type="evidence" value="ECO:0007669"/>
    <property type="project" value="UniProtKB-KW"/>
</dbReference>
<dbReference type="GO" id="GO:0008380">
    <property type="term" value="P:RNA splicing"/>
    <property type="evidence" value="ECO:0007669"/>
    <property type="project" value="UniProtKB-UniRule"/>
</dbReference>
<dbReference type="GO" id="GO:0008033">
    <property type="term" value="P:tRNA processing"/>
    <property type="evidence" value="ECO:0007669"/>
    <property type="project" value="UniProtKB-KW"/>
</dbReference>
<dbReference type="HAMAP" id="MF_01390">
    <property type="entry name" value="MatK"/>
    <property type="match status" value="1"/>
</dbReference>
<dbReference type="InterPro" id="IPR024937">
    <property type="entry name" value="Domain_X"/>
</dbReference>
<dbReference type="InterPro" id="IPR002866">
    <property type="entry name" value="Maturase_MatK"/>
</dbReference>
<dbReference type="InterPro" id="IPR024942">
    <property type="entry name" value="Maturase_MatK_N"/>
</dbReference>
<dbReference type="PANTHER" id="PTHR34811">
    <property type="entry name" value="MATURASE K"/>
    <property type="match status" value="1"/>
</dbReference>
<dbReference type="PANTHER" id="PTHR34811:SF1">
    <property type="entry name" value="MATURASE K"/>
    <property type="match status" value="1"/>
</dbReference>
<dbReference type="Pfam" id="PF01348">
    <property type="entry name" value="Intron_maturas2"/>
    <property type="match status" value="1"/>
</dbReference>
<dbReference type="Pfam" id="PF01824">
    <property type="entry name" value="MatK_N"/>
    <property type="match status" value="1"/>
</dbReference>
<proteinExistence type="inferred from homology"/>
<protein>
    <recommendedName>
        <fullName evidence="1">Maturase K</fullName>
    </recommendedName>
    <alternativeName>
        <fullName evidence="1">Intron maturase</fullName>
    </alternativeName>
</protein>
<keyword id="KW-0150">Chloroplast</keyword>
<keyword id="KW-0507">mRNA processing</keyword>
<keyword id="KW-0934">Plastid</keyword>
<keyword id="KW-0694">RNA-binding</keyword>
<keyword id="KW-0819">tRNA processing</keyword>
<sequence>MEEFQGYIEREGSWQHNFLYPLIFQEYLFRFAYGHGLNQSILLETSGNRKYSLLIVKRLITRMDQQNHLIPSANDSNQNDFWGHKHNFYSQMISEGFSGIVEIPFYRLLIASLEKQKKVKSHNFRSIHSIFPFLEDKFLPLNSVLDILLPYPAHLEILVQILRDWVRDASSLHLLRFFLYEDHNNNCNSLFTPKNSISFFFFRNQRFFVFLYNFHVCEYESIFFFLCNQSSHLRSTSYRALLERTFFYGKLDYLVNLFTKDFAVILWLFKDPSPHSVRYKGKFILASKGTFFLMHKWKFYLIHFWQCHFSVWSHPRRIYLNRLSTHCLDFIGFLSSVQLTSSVVRSQMLENAFLIDNTIKRFDPKIPISTLFGSLAKAQFCNRLGHPISKSVWIDLSDSDIIDRFGRICRNLSHYYSGSSRKKSLYRLKYILQISCARTLARKHKSAARAFLKRLGSEFLEEFFTEHEKVLSLILPKNGSNSRGFYRGSIWYLDIICIHNLANDE</sequence>
<organism>
    <name type="scientific">Silene otites</name>
    <name type="common">Spanish catchfly</name>
    <dbReference type="NCBI Taxonomy" id="42039"/>
    <lineage>
        <taxon>Eukaryota</taxon>
        <taxon>Viridiplantae</taxon>
        <taxon>Streptophyta</taxon>
        <taxon>Embryophyta</taxon>
        <taxon>Tracheophyta</taxon>
        <taxon>Spermatophyta</taxon>
        <taxon>Magnoliopsida</taxon>
        <taxon>eudicotyledons</taxon>
        <taxon>Gunneridae</taxon>
        <taxon>Pentapetalae</taxon>
        <taxon>Caryophyllales</taxon>
        <taxon>Caryophyllaceae</taxon>
        <taxon>Sileneae</taxon>
        <taxon>Silene</taxon>
        <taxon>Silene subgen. Silene</taxon>
        <taxon>Silene sect. Siphonomorpha</taxon>
    </lineage>
</organism>
<name>MATK_SILOT</name>
<evidence type="ECO:0000255" key="1">
    <source>
        <dbReference type="HAMAP-Rule" id="MF_01390"/>
    </source>
</evidence>
<gene>
    <name evidence="1" type="primary">matK</name>
</gene>
<reference key="1">
    <citation type="journal article" date="2005" name="Ann. Mo. Bot. Gard.">
        <title>Phylogenetics of Amaranthaceae based on matK/trnK sequence data -- evidence from parsimony, likelihood, and Bayesian analyses.</title>
        <authorList>
            <person name="Mueller K.F."/>
            <person name="Borsch T."/>
        </authorList>
    </citation>
    <scope>NUCLEOTIDE SEQUENCE [GENOMIC DNA]</scope>
</reference>
<feature type="chain" id="PRO_0000143707" description="Maturase K">
    <location>
        <begin position="1"/>
        <end position="505"/>
    </location>
</feature>
<comment type="function">
    <text evidence="1">Usually encoded in the trnK tRNA gene intron. Probably assists in splicing its own and other chloroplast group II introns.</text>
</comment>
<comment type="subcellular location">
    <subcellularLocation>
        <location>Plastid</location>
        <location>Chloroplast</location>
    </subcellularLocation>
</comment>
<comment type="similarity">
    <text evidence="1">Belongs to the intron maturase 2 family. MatK subfamily.</text>
</comment>
<accession>Q5J2W0</accession>